<sequence>MGIESSCDETGVGIVRWHPDGTCELLADEVASSVDQHARFGGVVPEIASRAHLEAIVPAMRRALSAAGIAKPDALAVTIGPGLAGALLVGVAAAKAYAAAWDVPFYALNHLGGHVAVDTLEHGPMPPCVALLVSGGHTHLLHVTDLAAPIVELGSTVDDAAGEAFDKVARLLGLGFPGGPALDAAARDGDPHAIAFPRGMTGPRDPRYDFSFSGLKTAVARHVEAAQRAGVAIADLPIPDIAASFQEAVADVLTMKAVRAAQDMGVDTLVLGGGATANSRIRSLAEERCAAAGLTLRVPKPRLCTDNGVMIAALGAHVIAGGARPSPLTVASDPGLPVSVSQIA</sequence>
<gene>
    <name evidence="1" type="primary">tsaD</name>
    <name type="synonym">gcp</name>
    <name type="ordered locus">NFA_8840</name>
</gene>
<comment type="function">
    <text evidence="1">Required for the formation of a threonylcarbamoyl group on adenosine at position 37 (t(6)A37) in tRNAs that read codons beginning with adenine. Is involved in the transfer of the threonylcarbamoyl moiety of threonylcarbamoyl-AMP (TC-AMP) to the N6 group of A37, together with TsaE and TsaB. TsaD likely plays a direct catalytic role in this reaction.</text>
</comment>
<comment type="catalytic activity">
    <reaction evidence="1">
        <text>L-threonylcarbamoyladenylate + adenosine(37) in tRNA = N(6)-L-threonylcarbamoyladenosine(37) in tRNA + AMP + H(+)</text>
        <dbReference type="Rhea" id="RHEA:37059"/>
        <dbReference type="Rhea" id="RHEA-COMP:10162"/>
        <dbReference type="Rhea" id="RHEA-COMP:10163"/>
        <dbReference type="ChEBI" id="CHEBI:15378"/>
        <dbReference type="ChEBI" id="CHEBI:73682"/>
        <dbReference type="ChEBI" id="CHEBI:74411"/>
        <dbReference type="ChEBI" id="CHEBI:74418"/>
        <dbReference type="ChEBI" id="CHEBI:456215"/>
        <dbReference type="EC" id="2.3.1.234"/>
    </reaction>
</comment>
<comment type="cofactor">
    <cofactor evidence="1">
        <name>Fe(2+)</name>
        <dbReference type="ChEBI" id="CHEBI:29033"/>
    </cofactor>
    <text evidence="1">Binds 1 Fe(2+) ion per subunit.</text>
</comment>
<comment type="subcellular location">
    <subcellularLocation>
        <location evidence="1">Cytoplasm</location>
    </subcellularLocation>
</comment>
<comment type="similarity">
    <text evidence="1">Belongs to the KAE1 / TsaD family.</text>
</comment>
<proteinExistence type="inferred from homology"/>
<protein>
    <recommendedName>
        <fullName evidence="1">tRNA N6-adenosine threonylcarbamoyltransferase</fullName>
        <ecNumber evidence="1">2.3.1.234</ecNumber>
    </recommendedName>
    <alternativeName>
        <fullName evidence="1">N6-L-threonylcarbamoyladenine synthase</fullName>
        <shortName evidence="1">t(6)A synthase</shortName>
    </alternativeName>
    <alternativeName>
        <fullName evidence="1">t(6)A37 threonylcarbamoyladenosine biosynthesis protein TsaD</fullName>
    </alternativeName>
    <alternativeName>
        <fullName evidence="1">tRNA threonylcarbamoyladenosine biosynthesis protein TsaD</fullName>
    </alternativeName>
</protein>
<keyword id="KW-0012">Acyltransferase</keyword>
<keyword id="KW-0963">Cytoplasm</keyword>
<keyword id="KW-0408">Iron</keyword>
<keyword id="KW-0479">Metal-binding</keyword>
<keyword id="KW-1185">Reference proteome</keyword>
<keyword id="KW-0808">Transferase</keyword>
<keyword id="KW-0819">tRNA processing</keyword>
<reference key="1">
    <citation type="journal article" date="2004" name="Proc. Natl. Acad. Sci. U.S.A.">
        <title>The complete genomic sequence of Nocardia farcinica IFM 10152.</title>
        <authorList>
            <person name="Ishikawa J."/>
            <person name="Yamashita A."/>
            <person name="Mikami Y."/>
            <person name="Hoshino Y."/>
            <person name="Kurita H."/>
            <person name="Hotta K."/>
            <person name="Shiba T."/>
            <person name="Hattori M."/>
        </authorList>
    </citation>
    <scope>NUCLEOTIDE SEQUENCE [LARGE SCALE GENOMIC DNA]</scope>
    <source>
        <strain>IFM 10152</strain>
    </source>
</reference>
<evidence type="ECO:0000255" key="1">
    <source>
        <dbReference type="HAMAP-Rule" id="MF_01445"/>
    </source>
</evidence>
<name>TSAD_NOCFA</name>
<dbReference type="EC" id="2.3.1.234" evidence="1"/>
<dbReference type="EMBL" id="AP006618">
    <property type="protein sequence ID" value="BAD55729.1"/>
    <property type="molecule type" value="Genomic_DNA"/>
</dbReference>
<dbReference type="SMR" id="Q5Z1G2"/>
<dbReference type="STRING" id="247156.NFA_8840"/>
<dbReference type="KEGG" id="nfa:NFA_8840"/>
<dbReference type="eggNOG" id="COG0533">
    <property type="taxonomic scope" value="Bacteria"/>
</dbReference>
<dbReference type="HOGENOM" id="CLU_023208_0_2_11"/>
<dbReference type="Proteomes" id="UP000006820">
    <property type="component" value="Chromosome"/>
</dbReference>
<dbReference type="GO" id="GO:0005737">
    <property type="term" value="C:cytoplasm"/>
    <property type="evidence" value="ECO:0007669"/>
    <property type="project" value="UniProtKB-SubCell"/>
</dbReference>
<dbReference type="GO" id="GO:0005506">
    <property type="term" value="F:iron ion binding"/>
    <property type="evidence" value="ECO:0007669"/>
    <property type="project" value="UniProtKB-UniRule"/>
</dbReference>
<dbReference type="GO" id="GO:0061711">
    <property type="term" value="F:N(6)-L-threonylcarbamoyladenine synthase activity"/>
    <property type="evidence" value="ECO:0007669"/>
    <property type="project" value="UniProtKB-EC"/>
</dbReference>
<dbReference type="GO" id="GO:0002949">
    <property type="term" value="P:tRNA threonylcarbamoyladenosine modification"/>
    <property type="evidence" value="ECO:0007669"/>
    <property type="project" value="UniProtKB-UniRule"/>
</dbReference>
<dbReference type="CDD" id="cd24133">
    <property type="entry name" value="ASKHA_NBD_TsaD_bac"/>
    <property type="match status" value="1"/>
</dbReference>
<dbReference type="FunFam" id="3.30.420.40:FF:000012">
    <property type="entry name" value="tRNA N6-adenosine threonylcarbamoyltransferase"/>
    <property type="match status" value="1"/>
</dbReference>
<dbReference type="FunFam" id="3.30.420.40:FF:000040">
    <property type="entry name" value="tRNA N6-adenosine threonylcarbamoyltransferase"/>
    <property type="match status" value="1"/>
</dbReference>
<dbReference type="Gene3D" id="3.30.420.40">
    <property type="match status" value="2"/>
</dbReference>
<dbReference type="HAMAP" id="MF_01445">
    <property type="entry name" value="TsaD"/>
    <property type="match status" value="1"/>
</dbReference>
<dbReference type="InterPro" id="IPR043129">
    <property type="entry name" value="ATPase_NBD"/>
</dbReference>
<dbReference type="InterPro" id="IPR000905">
    <property type="entry name" value="Gcp-like_dom"/>
</dbReference>
<dbReference type="InterPro" id="IPR017861">
    <property type="entry name" value="KAE1/TsaD"/>
</dbReference>
<dbReference type="InterPro" id="IPR017860">
    <property type="entry name" value="Peptidase_M22_CS"/>
</dbReference>
<dbReference type="InterPro" id="IPR022450">
    <property type="entry name" value="TsaD"/>
</dbReference>
<dbReference type="NCBIfam" id="TIGR00329">
    <property type="entry name" value="gcp_kae1"/>
    <property type="match status" value="1"/>
</dbReference>
<dbReference type="NCBIfam" id="TIGR03723">
    <property type="entry name" value="T6A_TsaD_YgjD"/>
    <property type="match status" value="1"/>
</dbReference>
<dbReference type="PANTHER" id="PTHR11735">
    <property type="entry name" value="TRNA N6-ADENOSINE THREONYLCARBAMOYLTRANSFERASE"/>
    <property type="match status" value="1"/>
</dbReference>
<dbReference type="PANTHER" id="PTHR11735:SF6">
    <property type="entry name" value="TRNA N6-ADENOSINE THREONYLCARBAMOYLTRANSFERASE, MITOCHONDRIAL"/>
    <property type="match status" value="1"/>
</dbReference>
<dbReference type="Pfam" id="PF00814">
    <property type="entry name" value="TsaD"/>
    <property type="match status" value="1"/>
</dbReference>
<dbReference type="PRINTS" id="PR00789">
    <property type="entry name" value="OSIALOPTASE"/>
</dbReference>
<dbReference type="SUPFAM" id="SSF53067">
    <property type="entry name" value="Actin-like ATPase domain"/>
    <property type="match status" value="1"/>
</dbReference>
<dbReference type="PROSITE" id="PS01016">
    <property type="entry name" value="GLYCOPROTEASE"/>
    <property type="match status" value="1"/>
</dbReference>
<feature type="chain" id="PRO_0000303459" description="tRNA N6-adenosine threonylcarbamoyltransferase">
    <location>
        <begin position="1"/>
        <end position="344"/>
    </location>
</feature>
<feature type="binding site" evidence="1">
    <location>
        <position position="110"/>
    </location>
    <ligand>
        <name>Fe cation</name>
        <dbReference type="ChEBI" id="CHEBI:24875"/>
    </ligand>
</feature>
<feature type="binding site" evidence="1">
    <location>
        <position position="114"/>
    </location>
    <ligand>
        <name>Fe cation</name>
        <dbReference type="ChEBI" id="CHEBI:24875"/>
    </ligand>
</feature>
<feature type="binding site" evidence="1">
    <location>
        <begin position="132"/>
        <end position="136"/>
    </location>
    <ligand>
        <name>substrate</name>
    </ligand>
</feature>
<feature type="binding site" evidence="1">
    <location>
        <position position="166"/>
    </location>
    <ligand>
        <name>substrate</name>
    </ligand>
</feature>
<feature type="binding site" evidence="1">
    <location>
        <position position="179"/>
    </location>
    <ligand>
        <name>substrate</name>
    </ligand>
</feature>
<feature type="binding site" evidence="1">
    <location>
        <position position="183"/>
    </location>
    <ligand>
        <name>substrate</name>
    </ligand>
</feature>
<feature type="binding site" evidence="1">
    <location>
        <position position="278"/>
    </location>
    <ligand>
        <name>substrate</name>
    </ligand>
</feature>
<feature type="binding site" evidence="1">
    <location>
        <position position="306"/>
    </location>
    <ligand>
        <name>Fe cation</name>
        <dbReference type="ChEBI" id="CHEBI:24875"/>
    </ligand>
</feature>
<organism>
    <name type="scientific">Nocardia farcinica (strain IFM 10152)</name>
    <dbReference type="NCBI Taxonomy" id="247156"/>
    <lineage>
        <taxon>Bacteria</taxon>
        <taxon>Bacillati</taxon>
        <taxon>Actinomycetota</taxon>
        <taxon>Actinomycetes</taxon>
        <taxon>Mycobacteriales</taxon>
        <taxon>Nocardiaceae</taxon>
        <taxon>Nocardia</taxon>
    </lineage>
</organism>
<accession>Q5Z1G2</accession>